<reference key="1">
    <citation type="submission" date="2009-05" db="EMBL/GenBank/DDBJ databases">
        <title>Complete sequence of Tolumonas auensis DSM 9187.</title>
        <authorList>
            <consortium name="US DOE Joint Genome Institute"/>
            <person name="Lucas S."/>
            <person name="Copeland A."/>
            <person name="Lapidus A."/>
            <person name="Glavina del Rio T."/>
            <person name="Tice H."/>
            <person name="Bruce D."/>
            <person name="Goodwin L."/>
            <person name="Pitluck S."/>
            <person name="Chertkov O."/>
            <person name="Brettin T."/>
            <person name="Detter J.C."/>
            <person name="Han C."/>
            <person name="Larimer F."/>
            <person name="Land M."/>
            <person name="Hauser L."/>
            <person name="Kyrpides N."/>
            <person name="Mikhailova N."/>
            <person name="Spring S."/>
            <person name="Beller H."/>
        </authorList>
    </citation>
    <scope>NUCLEOTIDE SEQUENCE [LARGE SCALE GENOMIC DNA]</scope>
    <source>
        <strain>DSM 9187 / NBRC 110442 / TA 4</strain>
    </source>
</reference>
<sequence length="192" mass="20788">MITISESAQAHFRKLLEKQAENTNIRVFVMNPGTPNAECGVSYCPPDAVEPEDSRQPFDGFDAIIDPNSAPFLEEAAIDFISDQMGSQLTLKAPNAKMRKVDDNASLAERVEYVLQSQVNPSLAAHGGRVTLTEITDDGVAILQFGGGCNGCSMVDVTLKEGIEKQLLELFPGELTGAKDATEHARGEHSFY</sequence>
<evidence type="ECO:0000255" key="1">
    <source>
        <dbReference type="HAMAP-Rule" id="MF_01637"/>
    </source>
</evidence>
<feature type="chain" id="PRO_1000215820" description="Fe/S biogenesis protein NfuA">
    <location>
        <begin position="1"/>
        <end position="192"/>
    </location>
</feature>
<feature type="binding site" evidence="1">
    <location>
        <position position="149"/>
    </location>
    <ligand>
        <name>[4Fe-4S] cluster</name>
        <dbReference type="ChEBI" id="CHEBI:49883"/>
    </ligand>
</feature>
<feature type="binding site" evidence="1">
    <location>
        <position position="152"/>
    </location>
    <ligand>
        <name>[4Fe-4S] cluster</name>
        <dbReference type="ChEBI" id="CHEBI:49883"/>
    </ligand>
</feature>
<gene>
    <name evidence="1" type="primary">nfuA</name>
    <name type="ordered locus">Tola_0510</name>
</gene>
<name>NFUA_TOLAT</name>
<accession>C4LA10</accession>
<organism>
    <name type="scientific">Tolumonas auensis (strain DSM 9187 / NBRC 110442 / TA 4)</name>
    <dbReference type="NCBI Taxonomy" id="595494"/>
    <lineage>
        <taxon>Bacteria</taxon>
        <taxon>Pseudomonadati</taxon>
        <taxon>Pseudomonadota</taxon>
        <taxon>Gammaproteobacteria</taxon>
        <taxon>Aeromonadales</taxon>
        <taxon>Aeromonadaceae</taxon>
        <taxon>Tolumonas</taxon>
    </lineage>
</organism>
<proteinExistence type="inferred from homology"/>
<dbReference type="EMBL" id="CP001616">
    <property type="protein sequence ID" value="ACQ92139.1"/>
    <property type="molecule type" value="Genomic_DNA"/>
</dbReference>
<dbReference type="RefSeq" id="WP_012728738.1">
    <property type="nucleotide sequence ID" value="NC_012691.1"/>
</dbReference>
<dbReference type="SMR" id="C4LA10"/>
<dbReference type="STRING" id="595494.Tola_0510"/>
<dbReference type="KEGG" id="tau:Tola_0510"/>
<dbReference type="eggNOG" id="COG0316">
    <property type="taxonomic scope" value="Bacteria"/>
</dbReference>
<dbReference type="eggNOG" id="COG0694">
    <property type="taxonomic scope" value="Bacteria"/>
</dbReference>
<dbReference type="HOGENOM" id="CLU_094569_0_0_6"/>
<dbReference type="OrthoDB" id="9785450at2"/>
<dbReference type="Proteomes" id="UP000009073">
    <property type="component" value="Chromosome"/>
</dbReference>
<dbReference type="GO" id="GO:0051539">
    <property type="term" value="F:4 iron, 4 sulfur cluster binding"/>
    <property type="evidence" value="ECO:0007669"/>
    <property type="project" value="UniProtKB-UniRule"/>
</dbReference>
<dbReference type="GO" id="GO:0005506">
    <property type="term" value="F:iron ion binding"/>
    <property type="evidence" value="ECO:0007669"/>
    <property type="project" value="InterPro"/>
</dbReference>
<dbReference type="GO" id="GO:0016226">
    <property type="term" value="P:iron-sulfur cluster assembly"/>
    <property type="evidence" value="ECO:0007669"/>
    <property type="project" value="UniProtKB-UniRule"/>
</dbReference>
<dbReference type="GO" id="GO:0051604">
    <property type="term" value="P:protein maturation"/>
    <property type="evidence" value="ECO:0007669"/>
    <property type="project" value="UniProtKB-UniRule"/>
</dbReference>
<dbReference type="Gene3D" id="3.30.300.130">
    <property type="entry name" value="Fe-S cluster assembly (FSCA)"/>
    <property type="match status" value="1"/>
</dbReference>
<dbReference type="Gene3D" id="2.60.300.12">
    <property type="entry name" value="HesB-like domain"/>
    <property type="match status" value="1"/>
</dbReference>
<dbReference type="HAMAP" id="MF_01637">
    <property type="entry name" value="Fe_S_biogen_NfuA"/>
    <property type="match status" value="1"/>
</dbReference>
<dbReference type="InterPro" id="IPR017726">
    <property type="entry name" value="Fe/S_biogenesis_protein_NfuA"/>
</dbReference>
<dbReference type="InterPro" id="IPR000361">
    <property type="entry name" value="FeS_biogenesis"/>
</dbReference>
<dbReference type="InterPro" id="IPR034904">
    <property type="entry name" value="FSCA_dom_sf"/>
</dbReference>
<dbReference type="InterPro" id="IPR035903">
    <property type="entry name" value="HesB-like_dom_sf"/>
</dbReference>
<dbReference type="InterPro" id="IPR001075">
    <property type="entry name" value="NIF_FeS_clus_asmbl_NifU_C"/>
</dbReference>
<dbReference type="NCBIfam" id="NF008392">
    <property type="entry name" value="PRK11190.1"/>
    <property type="match status" value="1"/>
</dbReference>
<dbReference type="NCBIfam" id="TIGR03341">
    <property type="entry name" value="YhgI_GntY"/>
    <property type="match status" value="1"/>
</dbReference>
<dbReference type="PANTHER" id="PTHR11178:SF51">
    <property type="entry name" value="FE_S BIOGENESIS PROTEIN NFUA"/>
    <property type="match status" value="1"/>
</dbReference>
<dbReference type="PANTHER" id="PTHR11178">
    <property type="entry name" value="IRON-SULFUR CLUSTER SCAFFOLD PROTEIN NFU-RELATED"/>
    <property type="match status" value="1"/>
</dbReference>
<dbReference type="Pfam" id="PF01521">
    <property type="entry name" value="Fe-S_biosyn"/>
    <property type="match status" value="1"/>
</dbReference>
<dbReference type="Pfam" id="PF01106">
    <property type="entry name" value="NifU"/>
    <property type="match status" value="1"/>
</dbReference>
<dbReference type="SUPFAM" id="SSF117916">
    <property type="entry name" value="Fe-S cluster assembly (FSCA) domain-like"/>
    <property type="match status" value="1"/>
</dbReference>
<dbReference type="SUPFAM" id="SSF89360">
    <property type="entry name" value="HesB-like domain"/>
    <property type="match status" value="1"/>
</dbReference>
<protein>
    <recommendedName>
        <fullName evidence="1">Fe/S biogenesis protein NfuA</fullName>
    </recommendedName>
</protein>
<comment type="function">
    <text evidence="1">Involved in iron-sulfur cluster biogenesis. Binds a 4Fe-4S cluster, can transfer this cluster to apoproteins, and thereby intervenes in the maturation of Fe/S proteins. Could also act as a scaffold/chaperone for damaged Fe/S proteins.</text>
</comment>
<comment type="cofactor">
    <cofactor evidence="1">
        <name>[4Fe-4S] cluster</name>
        <dbReference type="ChEBI" id="CHEBI:49883"/>
    </cofactor>
    <text evidence="1">Binds 1 [4Fe-4S] cluster per subunit. The cluster is presumably bound at the interface of two monomers.</text>
</comment>
<comment type="subunit">
    <text evidence="1">Homodimer.</text>
</comment>
<comment type="similarity">
    <text evidence="1">Belongs to the NfuA family.</text>
</comment>
<keyword id="KW-0004">4Fe-4S</keyword>
<keyword id="KW-0408">Iron</keyword>
<keyword id="KW-0411">Iron-sulfur</keyword>
<keyword id="KW-0479">Metal-binding</keyword>
<keyword id="KW-1185">Reference proteome</keyword>